<proteinExistence type="evidence at protein level"/>
<protein>
    <recommendedName>
        <fullName evidence="8">Outer mitochondrial transmembrane helix translocase</fullName>
        <ecNumber evidence="1 2">7.4.2.-</ecNumber>
    </recommendedName>
    <alternativeName>
        <fullName evidence="8">ATPase family AAA domain-containing protein 1</fullName>
    </alternativeName>
    <alternativeName>
        <fullName evidence="6">Neuroprotective protein 6</fullName>
    </alternativeName>
    <alternativeName>
        <fullName evidence="7">Thorase</fullName>
    </alternativeName>
</protein>
<sequence length="361" mass="40717">MVHAEAFSRPLSRNEVVGLIFRLTIFGAVTYFTIKWMVDAIDPTRKQKVEAQKQAEKLMKQIGVKNVKLSEYEMSIAAHLVDPLNMHVTWSDIAGLDDVITDLKDTVILPIKKKHLFENSRLLQPPKGVLLYGPPGCGKTLIAKATAKEAGCRFINLQPSTLTDKWYGESQKLAAAVFSLAIKLQPSIIFIDEIDSFLRNRSSSDHEATAMMKAQFMSLWDGLDTDHSCQVIVMGATNRPQDLDSAIMRRMPTRFHINQPALKQREAILKLILKNENVDRHVDLLEVAQETDGFSGSDLKEMCRDAALLCVREYVNSTSEESHDEDEIRPVQQQDLHRAIEKMKKSKDAAFQSVLTHVCLD</sequence>
<dbReference type="EC" id="7.4.2.-" evidence="1 2"/>
<dbReference type="EMBL" id="BC094514">
    <property type="protein sequence ID" value="AAH94514.1"/>
    <property type="molecule type" value="mRNA"/>
</dbReference>
<dbReference type="EMBL" id="EF688601">
    <property type="protein sequence ID" value="ABX10437.1"/>
    <property type="status" value="ALT_INIT"/>
    <property type="molecule type" value="mRNA"/>
</dbReference>
<dbReference type="RefSeq" id="NP_001030174.1">
    <property type="nucleotide sequence ID" value="NM_001035002.1"/>
</dbReference>
<dbReference type="RefSeq" id="XP_038936585.1">
    <property type="nucleotide sequence ID" value="XM_039080657.2"/>
</dbReference>
<dbReference type="RefSeq" id="XP_038936590.1">
    <property type="nucleotide sequence ID" value="XM_039080662.2"/>
</dbReference>
<dbReference type="RefSeq" id="XP_038936599.1">
    <property type="nucleotide sequence ID" value="XM_039080671.2"/>
</dbReference>
<dbReference type="SMR" id="Q505J9"/>
<dbReference type="FunCoup" id="Q505J9">
    <property type="interactions" value="2693"/>
</dbReference>
<dbReference type="IntAct" id="Q505J9">
    <property type="interactions" value="1"/>
</dbReference>
<dbReference type="STRING" id="10116.ENSRNOP00000072875"/>
<dbReference type="iPTMnet" id="Q505J9"/>
<dbReference type="PhosphoSitePlus" id="Q505J9"/>
<dbReference type="SwissPalm" id="Q505J9"/>
<dbReference type="jPOST" id="Q505J9"/>
<dbReference type="PaxDb" id="10116-ENSRNOP00000014684"/>
<dbReference type="ABCD" id="Q505J9">
    <property type="antibodies" value="1 sequenced antibody"/>
</dbReference>
<dbReference type="GeneID" id="309532"/>
<dbReference type="KEGG" id="rno:309532"/>
<dbReference type="UCSC" id="RGD:1308570">
    <property type="organism name" value="rat"/>
</dbReference>
<dbReference type="AGR" id="RGD:1308570"/>
<dbReference type="CTD" id="84896"/>
<dbReference type="RGD" id="1308570">
    <property type="gene designation" value="Atad1"/>
</dbReference>
<dbReference type="eggNOG" id="KOG0737">
    <property type="taxonomic scope" value="Eukaryota"/>
</dbReference>
<dbReference type="HOGENOM" id="CLU_000688_21_14_1"/>
<dbReference type="InParanoid" id="Q505J9"/>
<dbReference type="Reactome" id="R-RNO-9603798">
    <property type="pathway name" value="Class I peroxisomal membrane protein import"/>
</dbReference>
<dbReference type="SABIO-RK" id="Q505J9"/>
<dbReference type="PRO" id="PR:Q505J9"/>
<dbReference type="Proteomes" id="UP000002494">
    <property type="component" value="Unplaced"/>
</dbReference>
<dbReference type="GO" id="GO:0098978">
    <property type="term" value="C:glutamatergic synapse"/>
    <property type="evidence" value="ECO:0000266"/>
    <property type="project" value="RGD"/>
</dbReference>
<dbReference type="GO" id="GO:0005741">
    <property type="term" value="C:mitochondrial outer membrane"/>
    <property type="evidence" value="ECO:0000250"/>
    <property type="project" value="UniProtKB"/>
</dbReference>
<dbReference type="GO" id="GO:0005778">
    <property type="term" value="C:peroxisomal membrane"/>
    <property type="evidence" value="ECO:0000250"/>
    <property type="project" value="UniProtKB"/>
</dbReference>
<dbReference type="GO" id="GO:0098794">
    <property type="term" value="C:postsynapse"/>
    <property type="evidence" value="ECO:0000266"/>
    <property type="project" value="RGD"/>
</dbReference>
<dbReference type="GO" id="GO:0045211">
    <property type="term" value="C:postsynaptic membrane"/>
    <property type="evidence" value="ECO:0000250"/>
    <property type="project" value="UniProtKB"/>
</dbReference>
<dbReference type="GO" id="GO:0005524">
    <property type="term" value="F:ATP binding"/>
    <property type="evidence" value="ECO:0007669"/>
    <property type="project" value="UniProtKB-KW"/>
</dbReference>
<dbReference type="GO" id="GO:0016887">
    <property type="term" value="F:ATP hydrolysis activity"/>
    <property type="evidence" value="ECO:0000250"/>
    <property type="project" value="UniProtKB"/>
</dbReference>
<dbReference type="GO" id="GO:0140567">
    <property type="term" value="F:membrane protein dislocase activity"/>
    <property type="evidence" value="ECO:0007669"/>
    <property type="project" value="RHEA"/>
</dbReference>
<dbReference type="GO" id="GO:0140570">
    <property type="term" value="P:extraction of mislocalized protein from mitochondrial outer membrane"/>
    <property type="evidence" value="ECO:0000250"/>
    <property type="project" value="UniProtKB"/>
</dbReference>
<dbReference type="GO" id="GO:0007612">
    <property type="term" value="P:learning"/>
    <property type="evidence" value="ECO:0000250"/>
    <property type="project" value="UniProtKB"/>
</dbReference>
<dbReference type="GO" id="GO:0007613">
    <property type="term" value="P:memory"/>
    <property type="evidence" value="ECO:0000250"/>
    <property type="project" value="UniProtKB"/>
</dbReference>
<dbReference type="GO" id="GO:0051967">
    <property type="term" value="P:negative regulation of synaptic transmission, glutamatergic"/>
    <property type="evidence" value="ECO:0000250"/>
    <property type="project" value="UniProtKB"/>
</dbReference>
<dbReference type="GO" id="GO:0002092">
    <property type="term" value="P:positive regulation of receptor internalization"/>
    <property type="evidence" value="ECO:0000250"/>
    <property type="project" value="UniProtKB"/>
</dbReference>
<dbReference type="GO" id="GO:0099149">
    <property type="term" value="P:regulation of postsynaptic neurotransmitter receptor internalization"/>
    <property type="evidence" value="ECO:0000266"/>
    <property type="project" value="RGD"/>
</dbReference>
<dbReference type="CDD" id="cd19520">
    <property type="entry name" value="RecA-like_ATAD1"/>
    <property type="match status" value="1"/>
</dbReference>
<dbReference type="FunFam" id="1.10.8.60:FF:000044">
    <property type="entry name" value="ATPase family AAA domain-containing protein 1"/>
    <property type="match status" value="1"/>
</dbReference>
<dbReference type="FunFam" id="3.40.50.300:FF:000538">
    <property type="entry name" value="ATPase family AAA domain-containing protein 1"/>
    <property type="match status" value="1"/>
</dbReference>
<dbReference type="Gene3D" id="1.10.8.60">
    <property type="match status" value="1"/>
</dbReference>
<dbReference type="Gene3D" id="3.40.50.300">
    <property type="entry name" value="P-loop containing nucleotide triphosphate hydrolases"/>
    <property type="match status" value="1"/>
</dbReference>
<dbReference type="InterPro" id="IPR003593">
    <property type="entry name" value="AAA+_ATPase"/>
</dbReference>
<dbReference type="InterPro" id="IPR041569">
    <property type="entry name" value="AAA_lid_3"/>
</dbReference>
<dbReference type="InterPro" id="IPR003959">
    <property type="entry name" value="ATPase_AAA_core"/>
</dbReference>
<dbReference type="InterPro" id="IPR003960">
    <property type="entry name" value="ATPase_AAA_CS"/>
</dbReference>
<dbReference type="InterPro" id="IPR051701">
    <property type="entry name" value="Mito_OM_Translocase_MSP1"/>
</dbReference>
<dbReference type="InterPro" id="IPR027417">
    <property type="entry name" value="P-loop_NTPase"/>
</dbReference>
<dbReference type="PANTHER" id="PTHR45644">
    <property type="entry name" value="AAA ATPASE, PUTATIVE (AFU_ORTHOLOGUE AFUA_2G12920)-RELATED-RELATED"/>
    <property type="match status" value="1"/>
</dbReference>
<dbReference type="PANTHER" id="PTHR45644:SF2">
    <property type="entry name" value="OUTER MITOCHONDRIAL TRANSMEMBRANE HELIX TRANSLOCASE"/>
    <property type="match status" value="1"/>
</dbReference>
<dbReference type="Pfam" id="PF00004">
    <property type="entry name" value="AAA"/>
    <property type="match status" value="1"/>
</dbReference>
<dbReference type="Pfam" id="PF17862">
    <property type="entry name" value="AAA_lid_3"/>
    <property type="match status" value="1"/>
</dbReference>
<dbReference type="SMART" id="SM00382">
    <property type="entry name" value="AAA"/>
    <property type="match status" value="1"/>
</dbReference>
<dbReference type="SUPFAM" id="SSF52540">
    <property type="entry name" value="P-loop containing nucleoside triphosphate hydrolases"/>
    <property type="match status" value="1"/>
</dbReference>
<dbReference type="PROSITE" id="PS00674">
    <property type="entry name" value="AAA"/>
    <property type="match status" value="1"/>
</dbReference>
<comment type="function">
    <text evidence="1 2 5">Outer mitochondrial translocase required to remove mislocalized tail-anchored transmembrane proteins on mitochondria (By similarity). Specifically recognizes and binds tail-anchored transmembrane proteins: acts as a dislocase that mediates the ATP-dependent extraction of mistargeted tail-anchored transmembrane proteins from the mitochondrion outer membrane (By similarity). Also plays a critical role in regulating the surface expression of AMPA receptors (AMPAR), thereby regulating synaptic plasticity and learning and memory (PubMed:21496646). Required for NMDA-stimulated AMPAR internalization and inhibition of GRIA1 and GRIA2 recycling back to the plasma membrane; these activities are ATPase-dependent (PubMed:21496646).</text>
</comment>
<comment type="catalytic activity">
    <reaction evidence="1 2">
        <text>[protein]-with a C-terminal TM segment(out) + ATP + H2O = [protein]-with a C-terminal TM segment(in) + ADP + phosphate + H(+)</text>
        <dbReference type="Rhea" id="RHEA:66168"/>
        <dbReference type="Rhea" id="RHEA-COMP:16963"/>
        <dbReference type="ChEBI" id="CHEBI:15377"/>
        <dbReference type="ChEBI" id="CHEBI:15378"/>
        <dbReference type="ChEBI" id="CHEBI:30616"/>
        <dbReference type="ChEBI" id="CHEBI:43474"/>
        <dbReference type="ChEBI" id="CHEBI:90782"/>
        <dbReference type="ChEBI" id="CHEBI:456216"/>
    </reaction>
</comment>
<comment type="biophysicochemical properties">
    <kinetics>
        <KM evidence="5">43.4 mM for ATP</KM>
        <Vmax evidence="5">11.0 nM/min/mg enzyme</Vmax>
    </kinetics>
</comment>
<comment type="subunit">
    <text evidence="5">Interacts with GRIA2 and GRIP1 in an ATP-dependent manner (PubMed:21496646). ATAD1-catalyzed ATP hydrolysis disrupts not only its binding to GRIA2 and GRIP1, but also interaction between GRIP1 and GRIA2, leading to AMPAR complex disassembly (PubMed:21496646).</text>
</comment>
<comment type="interaction">
    <interactant intactId="EBI-4280289">
        <id>Q505J9</id>
    </interactant>
    <interactant intactId="EBI-77718">
        <id>P19491</id>
        <label>Gria2</label>
    </interactant>
    <organismsDiffer>false</organismsDiffer>
    <experiments>3</experiments>
</comment>
<comment type="subcellular location">
    <subcellularLocation>
        <location evidence="2">Mitochondrion outer membrane</location>
        <topology evidence="4">Single-pass membrane protein</topology>
    </subcellularLocation>
    <subcellularLocation>
        <location evidence="2">Peroxisome membrane</location>
        <topology evidence="4">Single-pass membrane protein</topology>
    </subcellularLocation>
    <subcellularLocation>
        <location evidence="3">Postsynaptic cell membrane</location>
        <topology evidence="4">Single-pass membrane protein</topology>
    </subcellularLocation>
</comment>
<comment type="similarity">
    <text evidence="8">Belongs to the AAA ATPase family. MSP1 subfamily.</text>
</comment>
<comment type="sequence caution" evidence="8">
    <conflict type="erroneous initiation">
        <sequence resource="EMBL-CDS" id="ABX10437"/>
    </conflict>
    <text>Truncated N-terminus.</text>
</comment>
<organism>
    <name type="scientific">Rattus norvegicus</name>
    <name type="common">Rat</name>
    <dbReference type="NCBI Taxonomy" id="10116"/>
    <lineage>
        <taxon>Eukaryota</taxon>
        <taxon>Metazoa</taxon>
        <taxon>Chordata</taxon>
        <taxon>Craniata</taxon>
        <taxon>Vertebrata</taxon>
        <taxon>Euteleostomi</taxon>
        <taxon>Mammalia</taxon>
        <taxon>Eutheria</taxon>
        <taxon>Euarchontoglires</taxon>
        <taxon>Glires</taxon>
        <taxon>Rodentia</taxon>
        <taxon>Myomorpha</taxon>
        <taxon>Muroidea</taxon>
        <taxon>Muridae</taxon>
        <taxon>Murinae</taxon>
        <taxon>Rattus</taxon>
    </lineage>
</organism>
<name>ATAD1_RAT</name>
<accession>Q505J9</accession>
<accession>B3STU2</accession>
<feature type="chain" id="PRO_0000084793" description="Outer mitochondrial transmembrane helix translocase">
    <location>
        <begin position="1"/>
        <end position="361"/>
    </location>
</feature>
<feature type="topological domain" description="Mitochondrial intermembrane" evidence="8">
    <location>
        <begin position="1"/>
        <end position="15"/>
    </location>
</feature>
<feature type="transmembrane region" description="Helical" evidence="4">
    <location>
        <begin position="16"/>
        <end position="32"/>
    </location>
</feature>
<feature type="topological domain" description="Cytoplasmic" evidence="8">
    <location>
        <begin position="33"/>
        <end position="361"/>
    </location>
</feature>
<feature type="binding site" evidence="4">
    <location>
        <begin position="133"/>
        <end position="140"/>
    </location>
    <ligand>
        <name>ATP</name>
        <dbReference type="ChEBI" id="CHEBI:30616"/>
    </ligand>
</feature>
<feature type="modified residue" description="Phosphoserine" evidence="3">
    <location>
        <position position="322"/>
    </location>
</feature>
<feature type="mutagenesis site" description="ATPase activity reduced by 60%-70%. ATPase activity reduced by 92%; when associated with Q-193." evidence="5">
    <original>K</original>
    <variation>T</variation>
    <location>
        <position position="139"/>
    </location>
</feature>
<feature type="mutagenesis site" description="ATPase activity reduced by 60%-70%. ATPase activity reduced by 92%; when associated with T-139." evidence="5">
    <original>E</original>
    <variation>Q</variation>
    <location>
        <position position="193"/>
    </location>
</feature>
<keyword id="KW-0067">ATP-binding</keyword>
<keyword id="KW-1003">Cell membrane</keyword>
<keyword id="KW-0472">Membrane</keyword>
<keyword id="KW-0496">Mitochondrion</keyword>
<keyword id="KW-1000">Mitochondrion outer membrane</keyword>
<keyword id="KW-0547">Nucleotide-binding</keyword>
<keyword id="KW-0576">Peroxisome</keyword>
<keyword id="KW-0597">Phosphoprotein</keyword>
<keyword id="KW-0628">Postsynaptic cell membrane</keyword>
<keyword id="KW-1185">Reference proteome</keyword>
<keyword id="KW-0770">Synapse</keyword>
<keyword id="KW-1278">Translocase</keyword>
<keyword id="KW-0812">Transmembrane</keyword>
<keyword id="KW-1133">Transmembrane helix</keyword>
<reference key="1">
    <citation type="journal article" date="2004" name="Genome Res.">
        <title>The status, quality, and expansion of the NIH full-length cDNA project: the Mammalian Gene Collection (MGC).</title>
        <authorList>
            <consortium name="The MGC Project Team"/>
        </authorList>
    </citation>
    <scope>NUCLEOTIDE SEQUENCE [LARGE SCALE MRNA]</scope>
    <source>
        <tissue>Ovary</tissue>
    </source>
</reference>
<reference key="2">
    <citation type="journal article" date="2010" name="PLoS ONE">
        <title>Functional identification of neuroprotective molecules.</title>
        <authorList>
            <person name="Dai C."/>
            <person name="Liang D."/>
            <person name="Li H."/>
            <person name="Sasaki M."/>
            <person name="Dawson T.M."/>
            <person name="Dawson V.L."/>
        </authorList>
    </citation>
    <scope>NUCLEOTIDE SEQUENCE [MRNA] OF 49-361</scope>
</reference>
<reference key="3">
    <citation type="journal article" date="2011" name="Cell">
        <title>The AAA+ ATPase Thorase regulates AMPA receptor-dependent synaptic plasticity and behavior.</title>
        <authorList>
            <person name="Zhang J."/>
            <person name="Wang Y."/>
            <person name="Chi Z."/>
            <person name="Keuss M.J."/>
            <person name="Pai Y.M."/>
            <person name="Kang H.C."/>
            <person name="Shin J.H."/>
            <person name="Bugayenko A."/>
            <person name="Wang H."/>
            <person name="Xiong Y."/>
            <person name="Pletnikov M.V."/>
            <person name="Mattson M.P."/>
            <person name="Dawson T.M."/>
            <person name="Dawson V.L."/>
        </authorList>
    </citation>
    <scope>FUNCTION</scope>
    <scope>ATPASE ACTIVITY</scope>
    <scope>BIOPHYSICOCHEMICAL PROPERTIES</scope>
    <scope>INTERACTION WITH GRIA2 AND GRIP1</scope>
    <scope>MUTAGENESIS OF LYS-139 AND GLU-193</scope>
</reference>
<gene>
    <name evidence="2" type="primary">Atad1</name>
    <name evidence="6" type="synonym">Npg6</name>
</gene>
<evidence type="ECO:0000250" key="1">
    <source>
        <dbReference type="UniProtKB" id="P28737"/>
    </source>
</evidence>
<evidence type="ECO:0000250" key="2">
    <source>
        <dbReference type="UniProtKB" id="Q8NBU5"/>
    </source>
</evidence>
<evidence type="ECO:0000250" key="3">
    <source>
        <dbReference type="UniProtKB" id="Q9D5T0"/>
    </source>
</evidence>
<evidence type="ECO:0000255" key="4"/>
<evidence type="ECO:0000269" key="5">
    <source>
    </source>
</evidence>
<evidence type="ECO:0000303" key="6">
    <source>
    </source>
</evidence>
<evidence type="ECO:0000303" key="7">
    <source>
    </source>
</evidence>
<evidence type="ECO:0000305" key="8"/>